<protein>
    <recommendedName>
        <fullName>2-(5''-triphosphoribosyl)-3'-dephosphocoenzyme-A synthase</fullName>
        <shortName>2-(5''-triphosphoribosyl)-3'-dephospho-CoA synthase</shortName>
        <ecNumber>2.4.2.52</ecNumber>
    </recommendedName>
</protein>
<dbReference type="EC" id="2.4.2.52"/>
<dbReference type="EMBL" id="BX950851">
    <property type="protein sequence ID" value="CAG75468.1"/>
    <property type="molecule type" value="Genomic_DNA"/>
</dbReference>
<dbReference type="RefSeq" id="WP_011094114.1">
    <property type="nucleotide sequence ID" value="NC_004547.2"/>
</dbReference>
<dbReference type="STRING" id="218491.ECA2569"/>
<dbReference type="KEGG" id="eca:ECA2569"/>
<dbReference type="PATRIC" id="fig|218491.5.peg.2603"/>
<dbReference type="eggNOG" id="COG1767">
    <property type="taxonomic scope" value="Bacteria"/>
</dbReference>
<dbReference type="HOGENOM" id="CLU_056179_1_0_6"/>
<dbReference type="OrthoDB" id="114886at2"/>
<dbReference type="Proteomes" id="UP000007966">
    <property type="component" value="Chromosome"/>
</dbReference>
<dbReference type="GO" id="GO:0005524">
    <property type="term" value="F:ATP binding"/>
    <property type="evidence" value="ECO:0007669"/>
    <property type="project" value="UniProtKB-KW"/>
</dbReference>
<dbReference type="GO" id="GO:0046917">
    <property type="term" value="F:triphosphoribosyl-dephospho-CoA synthase activity"/>
    <property type="evidence" value="ECO:0007669"/>
    <property type="project" value="UniProtKB-UniRule"/>
</dbReference>
<dbReference type="GO" id="GO:0051191">
    <property type="term" value="P:prosthetic group biosynthetic process"/>
    <property type="evidence" value="ECO:0007669"/>
    <property type="project" value="TreeGrafter"/>
</dbReference>
<dbReference type="Gene3D" id="1.10.4200.10">
    <property type="entry name" value="Triphosphoribosyl-dephospho-CoA protein"/>
    <property type="match status" value="1"/>
</dbReference>
<dbReference type="HAMAP" id="MF_00397">
    <property type="entry name" value="CitG"/>
    <property type="match status" value="1"/>
</dbReference>
<dbReference type="InterPro" id="IPR002736">
    <property type="entry name" value="CitG"/>
</dbReference>
<dbReference type="InterPro" id="IPR017551">
    <property type="entry name" value="TriPribosyl-deP-CoA_syn_CitG"/>
</dbReference>
<dbReference type="NCBIfam" id="TIGR03125">
    <property type="entry name" value="citrate_citG"/>
    <property type="match status" value="1"/>
</dbReference>
<dbReference type="PANTHER" id="PTHR30201:SF2">
    <property type="entry name" value="2-(5''-TRIPHOSPHORIBOSYL)-3'-DEPHOSPHOCOENZYME-A SYNTHASE"/>
    <property type="match status" value="1"/>
</dbReference>
<dbReference type="PANTHER" id="PTHR30201">
    <property type="entry name" value="TRIPHOSPHORIBOSYL-DEPHOSPHO-COA SYNTHASE"/>
    <property type="match status" value="1"/>
</dbReference>
<dbReference type="Pfam" id="PF01874">
    <property type="entry name" value="CitG"/>
    <property type="match status" value="1"/>
</dbReference>
<accession>Q6D425</accession>
<sequence length="301" mass="32417">MPTLRLPDGVLSAAVSRSVVSEYRERYSLLDIDQRVAHALTMEVMLTPKPGLVDRANNGSHRDMDVALFQTSIQAISPWFRHFTDAGYQHASVPLAQLLSQVRPIGIACEQAMLSATKGVNTHKGGIFAFGLLCTAAGWLTARGERVTQRSLCDSVAAMCHDLVRNELETCSGAATAGEHLYLRHGLTGARGEAASGFNTVCQHALPALQQAIAAGMDDETALLQTLLVLMAHNPDTNVVSRGGMDGLAFVQDYAQRLLAGPLDRQALIKMDEALIARNLSPGGSADLLALTWLLYHYPTE</sequence>
<name>CITG_PECAS</name>
<evidence type="ECO:0000250" key="1"/>
<evidence type="ECO:0000305" key="2"/>
<gene>
    <name type="primary">citG</name>
    <name type="ordered locus">ECA2569</name>
</gene>
<keyword id="KW-0067">ATP-binding</keyword>
<keyword id="KW-0547">Nucleotide-binding</keyword>
<keyword id="KW-1185">Reference proteome</keyword>
<keyword id="KW-0808">Transferase</keyword>
<reference key="1">
    <citation type="journal article" date="2004" name="Proc. Natl. Acad. Sci. U.S.A.">
        <title>Genome sequence of the enterobacterial phytopathogen Erwinia carotovora subsp. atroseptica and characterization of virulence factors.</title>
        <authorList>
            <person name="Bell K.S."/>
            <person name="Sebaihia M."/>
            <person name="Pritchard L."/>
            <person name="Holden M.T.G."/>
            <person name="Hyman L.J."/>
            <person name="Holeva M.C."/>
            <person name="Thomson N.R."/>
            <person name="Bentley S.D."/>
            <person name="Churcher L.J.C."/>
            <person name="Mungall K."/>
            <person name="Atkin R."/>
            <person name="Bason N."/>
            <person name="Brooks K."/>
            <person name="Chillingworth T."/>
            <person name="Clark K."/>
            <person name="Doggett J."/>
            <person name="Fraser A."/>
            <person name="Hance Z."/>
            <person name="Hauser H."/>
            <person name="Jagels K."/>
            <person name="Moule S."/>
            <person name="Norbertczak H."/>
            <person name="Ormond D."/>
            <person name="Price C."/>
            <person name="Quail M.A."/>
            <person name="Sanders M."/>
            <person name="Walker D."/>
            <person name="Whitehead S."/>
            <person name="Salmond G.P.C."/>
            <person name="Birch P.R.J."/>
            <person name="Parkhill J."/>
            <person name="Toth I.K."/>
        </authorList>
    </citation>
    <scope>NUCLEOTIDE SEQUENCE [LARGE SCALE GENOMIC DNA]</scope>
    <source>
        <strain>SCRI 1043 / ATCC BAA-672</strain>
    </source>
</reference>
<proteinExistence type="inferred from homology"/>
<feature type="chain" id="PRO_0000214667" description="2-(5''-triphosphoribosyl)-3'-dephosphocoenzyme-A synthase">
    <location>
        <begin position="1"/>
        <end position="301"/>
    </location>
</feature>
<comment type="function">
    <text evidence="1">Catalyzes the formation of 2-(5''-triphosphoribosyl)-3'-dephosphocoenzyme-A, the precursor of the prosthetic group of the holo-acyl carrier protein (gamma chain) of citrate lyase, from ATP and dephospho-CoA.</text>
</comment>
<comment type="catalytic activity">
    <reaction>
        <text>3'-dephospho-CoA + ATP = 2'-(5''-triphospho-alpha-D-ribosyl)-3'-dephospho-CoA + adenine</text>
        <dbReference type="Rhea" id="RHEA:15117"/>
        <dbReference type="ChEBI" id="CHEBI:16708"/>
        <dbReference type="ChEBI" id="CHEBI:30616"/>
        <dbReference type="ChEBI" id="CHEBI:57328"/>
        <dbReference type="ChEBI" id="CHEBI:61378"/>
        <dbReference type="EC" id="2.4.2.52"/>
    </reaction>
</comment>
<comment type="similarity">
    <text evidence="2">Belongs to the CitG/MdcB family.</text>
</comment>
<organism>
    <name type="scientific">Pectobacterium atrosepticum (strain SCRI 1043 / ATCC BAA-672)</name>
    <name type="common">Erwinia carotovora subsp. atroseptica</name>
    <dbReference type="NCBI Taxonomy" id="218491"/>
    <lineage>
        <taxon>Bacteria</taxon>
        <taxon>Pseudomonadati</taxon>
        <taxon>Pseudomonadota</taxon>
        <taxon>Gammaproteobacteria</taxon>
        <taxon>Enterobacterales</taxon>
        <taxon>Pectobacteriaceae</taxon>
        <taxon>Pectobacterium</taxon>
    </lineage>
</organism>